<name>COX2_RHAPU</name>
<comment type="function">
    <text evidence="3">Component of the cytochrome c oxidase, the last enzyme in the mitochondrial electron transport chain which drives oxidative phosphorylation. The respiratory chain contains 3 multisubunit complexes succinate dehydrogenase (complex II, CII), ubiquinol-cytochrome c oxidoreductase (cytochrome b-c1 complex, complex III, CIII) and cytochrome c oxidase (complex IV, CIV), that cooperate to transfer electrons derived from NADH and succinate to molecular oxygen, creating an electrochemical gradient over the inner membrane that drives transmembrane transport and the ATP synthase. Cytochrome c oxidase is the component of the respiratory chain that catalyzes the reduction of oxygen to water. Electrons originating from reduced cytochrome c in the intermembrane space (IMS) are transferred via the dinuclear copper A center (CU(A)) of subunit 2 and heme A of subunit 1 to the active site in subunit 1, a binuclear center (BNC) formed by heme A3 and copper B (CU(B)). The BNC reduces molecular oxygen to 2 water molecules using 4 electrons from cytochrome c in the IMS and 4 protons from the mitochondrial matrix.</text>
</comment>
<comment type="catalytic activity">
    <reaction evidence="3">
        <text>4 Fe(II)-[cytochrome c] + O2 + 8 H(+)(in) = 4 Fe(III)-[cytochrome c] + 2 H2O + 4 H(+)(out)</text>
        <dbReference type="Rhea" id="RHEA:11436"/>
        <dbReference type="Rhea" id="RHEA-COMP:10350"/>
        <dbReference type="Rhea" id="RHEA-COMP:14399"/>
        <dbReference type="ChEBI" id="CHEBI:15377"/>
        <dbReference type="ChEBI" id="CHEBI:15378"/>
        <dbReference type="ChEBI" id="CHEBI:15379"/>
        <dbReference type="ChEBI" id="CHEBI:29033"/>
        <dbReference type="ChEBI" id="CHEBI:29034"/>
        <dbReference type="EC" id="7.1.1.9"/>
    </reaction>
    <physiologicalReaction direction="left-to-right" evidence="3">
        <dbReference type="Rhea" id="RHEA:11437"/>
    </physiologicalReaction>
</comment>
<comment type="cofactor">
    <cofactor evidence="4">
        <name>Cu cation</name>
        <dbReference type="ChEBI" id="CHEBI:23378"/>
    </cofactor>
    <text evidence="4">Binds a dinuclear copper A center per subunit.</text>
</comment>
<comment type="subunit">
    <text evidence="1 4">Component of the cytochrome c oxidase (complex IV, CIV), a multisubunit enzyme composed of 14 subunits. The complex is composed of a catalytic core of 3 subunits MT-CO1, MT-CO2 and MT-CO3, encoded in the mitochondrial DNA, and 11 supernumerary subunits COX4I, COX5A, COX5B, COX6A, COX6B, COX6C, COX7A, COX7B, COX7C, COX8 and NDUFA4, which are encoded in the nuclear genome. The complex exists as a monomer or a dimer and forms supercomplexes (SCs) in the inner mitochondrial membrane with NADH-ubiquinone oxidoreductase (complex I, CI) and ubiquinol-cytochrome c oxidoreductase (cytochrome b-c1 complex, complex III, CIII), resulting in different assemblies (supercomplex SCI(1)III(2)IV(1) and megacomplex MCI(2)III(2)IV(2)) (By similarity). Found in a complex with TMEM177, COA6, COX18, COX20, SCO1 and SCO2. Interacts with TMEM177 in a COX20-dependent manner. Interacts with COX20. Interacts with COX16 (By similarity).</text>
</comment>
<comment type="subcellular location">
    <subcellularLocation>
        <location evidence="4">Mitochondrion inner membrane</location>
        <topology evidence="4">Multi-pass membrane protein</topology>
    </subcellularLocation>
</comment>
<comment type="similarity">
    <text evidence="5">Belongs to the cytochrome c oxidase subunit 2 family.</text>
</comment>
<evidence type="ECO:0000250" key="1">
    <source>
        <dbReference type="UniProtKB" id="P00403"/>
    </source>
</evidence>
<evidence type="ECO:0000250" key="2">
    <source>
        <dbReference type="UniProtKB" id="P00406"/>
    </source>
</evidence>
<evidence type="ECO:0000250" key="3">
    <source>
        <dbReference type="UniProtKB" id="P00410"/>
    </source>
</evidence>
<evidence type="ECO:0000250" key="4">
    <source>
        <dbReference type="UniProtKB" id="P68530"/>
    </source>
</evidence>
<evidence type="ECO:0000305" key="5"/>
<keyword id="KW-0186">Copper</keyword>
<keyword id="KW-0249">Electron transport</keyword>
<keyword id="KW-0460">Magnesium</keyword>
<keyword id="KW-0472">Membrane</keyword>
<keyword id="KW-0479">Metal-binding</keyword>
<keyword id="KW-0496">Mitochondrion</keyword>
<keyword id="KW-0999">Mitochondrion inner membrane</keyword>
<keyword id="KW-0597">Phosphoprotein</keyword>
<keyword id="KW-0679">Respiratory chain</keyword>
<keyword id="KW-1278">Translocase</keyword>
<keyword id="KW-0812">Transmembrane</keyword>
<keyword id="KW-1133">Transmembrane helix</keyword>
<keyword id="KW-0813">Transport</keyword>
<geneLocation type="mitochondrion"/>
<protein>
    <recommendedName>
        <fullName>Cytochrome c oxidase subunit 2</fullName>
        <ecNumber>7.1.1.9</ecNumber>
    </recommendedName>
    <alternativeName>
        <fullName>Cytochrome c oxidase polypeptide II</fullName>
    </alternativeName>
</protein>
<sequence>MAYPFQLGLQDATSPIMEELTNFHDHTLMIVFLISSLVLYIISLMLTTKLTHTSTMDAQEVETIWTILPAAILVLIALPSLRILYMMDEINNPALTVKTMGHQWYWSYEYTDYEDLCFDSYMTPTNELKPGELRLLEVDNRIVLPMELPIRMLISSEDVLHSWAVPSLGLKTDAIPGRLNQATVTSNRPGLFYGQCSEICGSNHSFMPIVLEMVPLKYFENWSASMI</sequence>
<reference key="1">
    <citation type="journal article" date="2005" name="Mol. Phylogenet. Evol.">
        <title>Multigene phylogeny of the Old World mice, Murinae, reveals distinct geographic lineages and the declining utility of mitochondrial genes compared to nuclear genes.</title>
        <authorList>
            <person name="Steppan S.J."/>
            <person name="Adkins R.M."/>
            <person name="Spinks P.Q."/>
            <person name="Hale C."/>
        </authorList>
    </citation>
    <scope>NUCLEOTIDE SEQUENCE [GENOMIC DNA]</scope>
</reference>
<proteinExistence type="inferred from homology"/>
<accession>Q38RV6</accession>
<feature type="chain" id="PRO_0000257851" description="Cytochrome c oxidase subunit 2">
    <location>
        <begin position="1"/>
        <end position="227"/>
    </location>
</feature>
<feature type="topological domain" description="Mitochondrial intermembrane" evidence="4">
    <location>
        <begin position="1"/>
        <end position="14"/>
    </location>
</feature>
<feature type="transmembrane region" description="Helical; Name=I" evidence="4">
    <location>
        <begin position="15"/>
        <end position="45"/>
    </location>
</feature>
<feature type="topological domain" description="Mitochondrial matrix" evidence="4">
    <location>
        <begin position="46"/>
        <end position="59"/>
    </location>
</feature>
<feature type="transmembrane region" description="Helical; Name=II" evidence="4">
    <location>
        <begin position="60"/>
        <end position="87"/>
    </location>
</feature>
<feature type="topological domain" description="Mitochondrial intermembrane" evidence="4">
    <location>
        <begin position="88"/>
        <end position="227"/>
    </location>
</feature>
<feature type="binding site" evidence="4">
    <location>
        <position position="161"/>
    </location>
    <ligand>
        <name>Cu cation</name>
        <dbReference type="ChEBI" id="CHEBI:23378"/>
        <label>A1</label>
    </ligand>
</feature>
<feature type="binding site" evidence="4">
    <location>
        <position position="196"/>
    </location>
    <ligand>
        <name>Cu cation</name>
        <dbReference type="ChEBI" id="CHEBI:23378"/>
        <label>A1</label>
    </ligand>
</feature>
<feature type="binding site" evidence="4">
    <location>
        <position position="196"/>
    </location>
    <ligand>
        <name>Cu cation</name>
        <dbReference type="ChEBI" id="CHEBI:23378"/>
        <label>A2</label>
    </ligand>
</feature>
<feature type="binding site" evidence="4">
    <location>
        <position position="198"/>
    </location>
    <ligand>
        <name>Cu cation</name>
        <dbReference type="ChEBI" id="CHEBI:23378"/>
        <label>A2</label>
    </ligand>
</feature>
<feature type="binding site" evidence="4">
    <location>
        <position position="198"/>
    </location>
    <ligand>
        <name>Mg(2+)</name>
        <dbReference type="ChEBI" id="CHEBI:18420"/>
        <note>ligand shared with MT-CO1</note>
    </ligand>
</feature>
<feature type="binding site" evidence="4">
    <location>
        <position position="200"/>
    </location>
    <ligand>
        <name>Cu cation</name>
        <dbReference type="ChEBI" id="CHEBI:23378"/>
        <label>A1</label>
    </ligand>
</feature>
<feature type="binding site" evidence="4">
    <location>
        <position position="200"/>
    </location>
    <ligand>
        <name>Cu cation</name>
        <dbReference type="ChEBI" id="CHEBI:23378"/>
        <label>A2</label>
    </ligand>
</feature>
<feature type="binding site" evidence="4">
    <location>
        <position position="204"/>
    </location>
    <ligand>
        <name>Cu cation</name>
        <dbReference type="ChEBI" id="CHEBI:23378"/>
        <label>A2</label>
    </ligand>
</feature>
<feature type="binding site" evidence="4">
    <location>
        <position position="207"/>
    </location>
    <ligand>
        <name>Cu cation</name>
        <dbReference type="ChEBI" id="CHEBI:23378"/>
        <label>A1</label>
    </ligand>
</feature>
<feature type="modified residue" description="Phosphotyrosine" evidence="2">
    <location>
        <position position="218"/>
    </location>
</feature>
<organism>
    <name type="scientific">Rhabdomys pumilio</name>
    <name type="common">Four-striped grass mouse</name>
    <dbReference type="NCBI Taxonomy" id="121573"/>
    <lineage>
        <taxon>Eukaryota</taxon>
        <taxon>Metazoa</taxon>
        <taxon>Chordata</taxon>
        <taxon>Craniata</taxon>
        <taxon>Vertebrata</taxon>
        <taxon>Euteleostomi</taxon>
        <taxon>Mammalia</taxon>
        <taxon>Eutheria</taxon>
        <taxon>Euarchontoglires</taxon>
        <taxon>Glires</taxon>
        <taxon>Rodentia</taxon>
        <taxon>Myomorpha</taxon>
        <taxon>Muroidea</taxon>
        <taxon>Muridae</taxon>
        <taxon>Murinae</taxon>
        <taxon>Rhabdomys</taxon>
    </lineage>
</organism>
<dbReference type="EC" id="7.1.1.9"/>
<dbReference type="EMBL" id="DQ019118">
    <property type="protein sequence ID" value="ABA28444.1"/>
    <property type="molecule type" value="Genomic_DNA"/>
</dbReference>
<dbReference type="SMR" id="Q38RV6"/>
<dbReference type="GO" id="GO:0005743">
    <property type="term" value="C:mitochondrial inner membrane"/>
    <property type="evidence" value="ECO:0007669"/>
    <property type="project" value="UniProtKB-SubCell"/>
</dbReference>
<dbReference type="GO" id="GO:0045277">
    <property type="term" value="C:respiratory chain complex IV"/>
    <property type="evidence" value="ECO:0000250"/>
    <property type="project" value="UniProtKB"/>
</dbReference>
<dbReference type="GO" id="GO:0005507">
    <property type="term" value="F:copper ion binding"/>
    <property type="evidence" value="ECO:0007669"/>
    <property type="project" value="InterPro"/>
</dbReference>
<dbReference type="GO" id="GO:0004129">
    <property type="term" value="F:cytochrome-c oxidase activity"/>
    <property type="evidence" value="ECO:0007669"/>
    <property type="project" value="UniProtKB-EC"/>
</dbReference>
<dbReference type="GO" id="GO:0042773">
    <property type="term" value="P:ATP synthesis coupled electron transport"/>
    <property type="evidence" value="ECO:0007669"/>
    <property type="project" value="TreeGrafter"/>
</dbReference>
<dbReference type="CDD" id="cd13912">
    <property type="entry name" value="CcO_II_C"/>
    <property type="match status" value="1"/>
</dbReference>
<dbReference type="FunFam" id="1.10.287.90:FF:000001">
    <property type="entry name" value="Cytochrome c oxidase subunit 2"/>
    <property type="match status" value="1"/>
</dbReference>
<dbReference type="FunFam" id="2.60.40.420:FF:000001">
    <property type="entry name" value="Cytochrome c oxidase subunit 2"/>
    <property type="match status" value="1"/>
</dbReference>
<dbReference type="Gene3D" id="1.10.287.90">
    <property type="match status" value="1"/>
</dbReference>
<dbReference type="Gene3D" id="2.60.40.420">
    <property type="entry name" value="Cupredoxins - blue copper proteins"/>
    <property type="match status" value="1"/>
</dbReference>
<dbReference type="InterPro" id="IPR045187">
    <property type="entry name" value="CcO_II"/>
</dbReference>
<dbReference type="InterPro" id="IPR002429">
    <property type="entry name" value="CcO_II-like_C"/>
</dbReference>
<dbReference type="InterPro" id="IPR034210">
    <property type="entry name" value="CcO_II_C"/>
</dbReference>
<dbReference type="InterPro" id="IPR001505">
    <property type="entry name" value="Copper_CuA"/>
</dbReference>
<dbReference type="InterPro" id="IPR008972">
    <property type="entry name" value="Cupredoxin"/>
</dbReference>
<dbReference type="InterPro" id="IPR014222">
    <property type="entry name" value="Cyt_c_oxidase_su2"/>
</dbReference>
<dbReference type="InterPro" id="IPR011759">
    <property type="entry name" value="Cyt_c_oxidase_su2_TM_dom"/>
</dbReference>
<dbReference type="InterPro" id="IPR036257">
    <property type="entry name" value="Cyt_c_oxidase_su2_TM_sf"/>
</dbReference>
<dbReference type="NCBIfam" id="TIGR02866">
    <property type="entry name" value="CoxB"/>
    <property type="match status" value="1"/>
</dbReference>
<dbReference type="PANTHER" id="PTHR22888:SF9">
    <property type="entry name" value="CYTOCHROME C OXIDASE SUBUNIT 2"/>
    <property type="match status" value="1"/>
</dbReference>
<dbReference type="PANTHER" id="PTHR22888">
    <property type="entry name" value="CYTOCHROME C OXIDASE, SUBUNIT II"/>
    <property type="match status" value="1"/>
</dbReference>
<dbReference type="Pfam" id="PF00116">
    <property type="entry name" value="COX2"/>
    <property type="match status" value="1"/>
</dbReference>
<dbReference type="Pfam" id="PF02790">
    <property type="entry name" value="COX2_TM"/>
    <property type="match status" value="1"/>
</dbReference>
<dbReference type="PRINTS" id="PR01166">
    <property type="entry name" value="CYCOXIDASEII"/>
</dbReference>
<dbReference type="SUPFAM" id="SSF49503">
    <property type="entry name" value="Cupredoxins"/>
    <property type="match status" value="1"/>
</dbReference>
<dbReference type="SUPFAM" id="SSF81464">
    <property type="entry name" value="Cytochrome c oxidase subunit II-like, transmembrane region"/>
    <property type="match status" value="1"/>
</dbReference>
<dbReference type="PROSITE" id="PS00078">
    <property type="entry name" value="COX2"/>
    <property type="match status" value="1"/>
</dbReference>
<dbReference type="PROSITE" id="PS50857">
    <property type="entry name" value="COX2_CUA"/>
    <property type="match status" value="1"/>
</dbReference>
<dbReference type="PROSITE" id="PS50999">
    <property type="entry name" value="COX2_TM"/>
    <property type="match status" value="1"/>
</dbReference>
<gene>
    <name type="primary">MT-CO2</name>
    <name type="synonym">COII</name>
    <name type="synonym">COX2</name>
    <name type="synonym">COXII</name>
    <name type="synonym">MTCO2</name>
</gene>